<protein>
    <recommendedName>
        <fullName evidence="1">UPF0473 protein LL0144</fullName>
    </recommendedName>
</protein>
<gene>
    <name type="ordered locus">LL0144</name>
    <name type="ORF">L142332</name>
</gene>
<keyword id="KW-1185">Reference proteome</keyword>
<evidence type="ECO:0000255" key="1">
    <source>
        <dbReference type="HAMAP-Rule" id="MF_01448"/>
    </source>
</evidence>
<proteinExistence type="inferred from homology"/>
<name>Y144_LACLA</name>
<feature type="chain" id="PRO_0000304844" description="UPF0473 protein LL0144">
    <location>
        <begin position="1"/>
        <end position="107"/>
    </location>
</feature>
<comment type="similarity">
    <text evidence="1">Belongs to the UPF0473 family.</text>
</comment>
<reference key="1">
    <citation type="journal article" date="2001" name="Genome Res.">
        <title>The complete genome sequence of the lactic acid bacterium Lactococcus lactis ssp. lactis IL1403.</title>
        <authorList>
            <person name="Bolotin A."/>
            <person name="Wincker P."/>
            <person name="Mauger S."/>
            <person name="Jaillon O."/>
            <person name="Malarme K."/>
            <person name="Weissenbach J."/>
            <person name="Ehrlich S.D."/>
            <person name="Sorokin A."/>
        </authorList>
    </citation>
    <scope>NUCLEOTIDE SEQUENCE [LARGE SCALE GENOMIC DNA]</scope>
    <source>
        <strain>IL1403</strain>
    </source>
</reference>
<accession>Q9CJ62</accession>
<dbReference type="EMBL" id="AE005176">
    <property type="protein sequence ID" value="AAK04242.1"/>
    <property type="molecule type" value="Genomic_DNA"/>
</dbReference>
<dbReference type="PIR" id="H86642">
    <property type="entry name" value="H86642"/>
</dbReference>
<dbReference type="RefSeq" id="NP_266300.1">
    <property type="nucleotide sequence ID" value="NC_002662.1"/>
</dbReference>
<dbReference type="RefSeq" id="WP_003131822.1">
    <property type="nucleotide sequence ID" value="NC_002662.1"/>
</dbReference>
<dbReference type="PaxDb" id="272623-L142332"/>
<dbReference type="EnsemblBacteria" id="AAK04242">
    <property type="protein sequence ID" value="AAK04242"/>
    <property type="gene ID" value="L142332"/>
</dbReference>
<dbReference type="KEGG" id="lla:L142332"/>
<dbReference type="PATRIC" id="fig|272623.7.peg.159"/>
<dbReference type="eggNOG" id="COG3906">
    <property type="taxonomic scope" value="Bacteria"/>
</dbReference>
<dbReference type="HOGENOM" id="CLU_146610_2_1_9"/>
<dbReference type="OrthoDB" id="2086132at2"/>
<dbReference type="Proteomes" id="UP000002196">
    <property type="component" value="Chromosome"/>
</dbReference>
<dbReference type="HAMAP" id="MF_01448">
    <property type="entry name" value="UPF0473"/>
    <property type="match status" value="1"/>
</dbReference>
<dbReference type="InterPro" id="IPR009711">
    <property type="entry name" value="UPF0473"/>
</dbReference>
<dbReference type="NCBIfam" id="NF010215">
    <property type="entry name" value="PRK13678.1-2"/>
    <property type="match status" value="1"/>
</dbReference>
<dbReference type="PANTHER" id="PTHR40066">
    <property type="entry name" value="UPF0473 PROTEIN CBO2561/CLC_2432"/>
    <property type="match status" value="1"/>
</dbReference>
<dbReference type="PANTHER" id="PTHR40066:SF1">
    <property type="entry name" value="UPF0473 PROTEIN CBO2561_CLC_2432"/>
    <property type="match status" value="1"/>
</dbReference>
<dbReference type="Pfam" id="PF06949">
    <property type="entry name" value="DUF1292"/>
    <property type="match status" value="1"/>
</dbReference>
<organism>
    <name type="scientific">Lactococcus lactis subsp. lactis (strain IL1403)</name>
    <name type="common">Streptococcus lactis</name>
    <dbReference type="NCBI Taxonomy" id="272623"/>
    <lineage>
        <taxon>Bacteria</taxon>
        <taxon>Bacillati</taxon>
        <taxon>Bacillota</taxon>
        <taxon>Bacilli</taxon>
        <taxon>Lactobacillales</taxon>
        <taxon>Streptococcaceae</taxon>
        <taxon>Lactococcus</taxon>
    </lineage>
</organism>
<sequence>MTHTHDHEHDHNHEPDYITLVDENGNESLFQILITIDGQEEFGKNYVVLQPTEFEEDEQGLIDVLAYSFTENADGTEGDLQPIPEDAEDEWDMIEEVFNSFMDEQED</sequence>